<evidence type="ECO:0000255" key="1">
    <source>
        <dbReference type="HAMAP-Rule" id="MF_00237"/>
    </source>
</evidence>
<evidence type="ECO:0000256" key="2">
    <source>
        <dbReference type="SAM" id="MobiDB-lite"/>
    </source>
</evidence>
<evidence type="ECO:0000269" key="3">
    <source>
    </source>
</evidence>
<evidence type="ECO:0000269" key="4">
    <source>
    </source>
</evidence>
<evidence type="ECO:0000269" key="5">
    <source>
    </source>
</evidence>
<evidence type="ECO:0000269" key="6">
    <source>
    </source>
</evidence>
<evidence type="ECO:0000269" key="7">
    <source>
    </source>
</evidence>
<evidence type="ECO:0000269" key="8">
    <source>
    </source>
</evidence>
<evidence type="ECO:0000269" key="9">
    <source>
    </source>
</evidence>
<evidence type="ECO:0000269" key="10">
    <source>
    </source>
</evidence>
<evidence type="ECO:0000269" key="11">
    <source>
    </source>
</evidence>
<evidence type="ECO:0000269" key="12">
    <source>
    </source>
</evidence>
<evidence type="ECO:0000269" key="13">
    <source>
    </source>
</evidence>
<evidence type="ECO:0000269" key="14">
    <source>
    </source>
</evidence>
<evidence type="ECO:0000269" key="15">
    <source>
    </source>
</evidence>
<evidence type="ECO:0000269" key="16">
    <source>
    </source>
</evidence>
<evidence type="ECO:0000269" key="17">
    <source>
    </source>
</evidence>
<keyword id="KW-0997">Cell inner membrane</keyword>
<keyword id="KW-1003">Cell membrane</keyword>
<keyword id="KW-0903">Direct protein sequencing</keyword>
<keyword id="KW-0472">Membrane</keyword>
<keyword id="KW-0653">Protein transport</keyword>
<keyword id="KW-1185">Reference proteome</keyword>
<keyword id="KW-0811">Translocation</keyword>
<keyword id="KW-0812">Transmembrane</keyword>
<keyword id="KW-1133">Transmembrane helix</keyword>
<keyword id="KW-0813">Transport</keyword>
<dbReference type="EMBL" id="AJ005830">
    <property type="protein sequence ID" value="CAA06725.1"/>
    <property type="molecule type" value="Genomic_DNA"/>
</dbReference>
<dbReference type="EMBL" id="AF067848">
    <property type="protein sequence ID" value="AAC19241.1"/>
    <property type="molecule type" value="Genomic_DNA"/>
</dbReference>
<dbReference type="EMBL" id="M87049">
    <property type="protein sequence ID" value="AAA67633.1"/>
    <property type="status" value="ALT_SEQ"/>
    <property type="molecule type" value="Genomic_DNA"/>
</dbReference>
<dbReference type="EMBL" id="U00096">
    <property type="protein sequence ID" value="AAT48228.1"/>
    <property type="molecule type" value="Genomic_DNA"/>
</dbReference>
<dbReference type="EMBL" id="AP009048">
    <property type="protein sequence ID" value="BAE77464.1"/>
    <property type="molecule type" value="Genomic_DNA"/>
</dbReference>
<dbReference type="PIR" id="G91224">
    <property type="entry name" value="G91224"/>
</dbReference>
<dbReference type="RefSeq" id="WP_000459594.1">
    <property type="nucleotide sequence ID" value="NZ_STEB01000021.1"/>
</dbReference>
<dbReference type="RefSeq" id="YP_026270.1">
    <property type="nucleotide sequence ID" value="NC_000913.3"/>
</dbReference>
<dbReference type="SMR" id="P69425"/>
<dbReference type="BioGRID" id="4262617">
    <property type="interactions" value="404"/>
</dbReference>
<dbReference type="ComplexPortal" id="CPX-3445">
    <property type="entry name" value="Twin-arginine translocation complex"/>
</dbReference>
<dbReference type="DIP" id="DIP-58536N"/>
<dbReference type="FunCoup" id="P69425">
    <property type="interactions" value="301"/>
</dbReference>
<dbReference type="IntAct" id="P69425">
    <property type="interactions" value="7"/>
</dbReference>
<dbReference type="MINT" id="P69425"/>
<dbReference type="STRING" id="511145.b3838"/>
<dbReference type="TCDB" id="2.A.64.1.1">
    <property type="family name" value="the twin arginine targeting (tat) family"/>
</dbReference>
<dbReference type="jPOST" id="P69425"/>
<dbReference type="PaxDb" id="511145-b3838"/>
<dbReference type="EnsemblBacteria" id="AAT48228">
    <property type="protein sequence ID" value="AAT48228"/>
    <property type="gene ID" value="b3838"/>
</dbReference>
<dbReference type="GeneID" id="93778098"/>
<dbReference type="GeneID" id="948319"/>
<dbReference type="KEGG" id="ecj:JW5580"/>
<dbReference type="KEGG" id="eco:b3838"/>
<dbReference type="KEGG" id="ecoc:C3026_20760"/>
<dbReference type="PATRIC" id="fig|1411691.4.peg.2871"/>
<dbReference type="EchoBASE" id="EB4068"/>
<dbReference type="eggNOG" id="COG1826">
    <property type="taxonomic scope" value="Bacteria"/>
</dbReference>
<dbReference type="HOGENOM" id="CLU_086034_1_0_6"/>
<dbReference type="InParanoid" id="P69425"/>
<dbReference type="OMA" id="ADQPRTH"/>
<dbReference type="OrthoDB" id="9816005at2"/>
<dbReference type="PhylomeDB" id="P69425"/>
<dbReference type="BioCyc" id="EcoCyc:G7808-MONOMER"/>
<dbReference type="BioCyc" id="MetaCyc:G7808-MONOMER"/>
<dbReference type="PHI-base" id="PHI:10982"/>
<dbReference type="PRO" id="PR:P69425"/>
<dbReference type="Proteomes" id="UP000000625">
    <property type="component" value="Chromosome"/>
</dbReference>
<dbReference type="GO" id="GO:0005886">
    <property type="term" value="C:plasma membrane"/>
    <property type="evidence" value="ECO:0000314"/>
    <property type="project" value="EcoCyc"/>
</dbReference>
<dbReference type="GO" id="GO:0033281">
    <property type="term" value="C:TAT protein transport complex"/>
    <property type="evidence" value="ECO:0000314"/>
    <property type="project" value="EcoCyc"/>
</dbReference>
<dbReference type="GO" id="GO:0042802">
    <property type="term" value="F:identical protein binding"/>
    <property type="evidence" value="ECO:0000314"/>
    <property type="project" value="EcoCyc"/>
</dbReference>
<dbReference type="GO" id="GO:0042803">
    <property type="term" value="F:protein homodimerization activity"/>
    <property type="evidence" value="ECO:0000314"/>
    <property type="project" value="EcoCyc"/>
</dbReference>
<dbReference type="GO" id="GO:0009977">
    <property type="term" value="F:proton motive force dependent protein transmembrane transporter activity"/>
    <property type="evidence" value="ECO:0000314"/>
    <property type="project" value="EcoCyc"/>
</dbReference>
<dbReference type="GO" id="GO:0065002">
    <property type="term" value="P:intracellular protein transmembrane transport"/>
    <property type="evidence" value="ECO:0000314"/>
    <property type="project" value="EcoCyc"/>
</dbReference>
<dbReference type="GO" id="GO:0043953">
    <property type="term" value="P:protein transport by the Tat complex"/>
    <property type="evidence" value="ECO:0000314"/>
    <property type="project" value="EcoCyc"/>
</dbReference>
<dbReference type="FunFam" id="1.20.5.3310:FF:000002">
    <property type="entry name" value="Sec-independent protein translocase protein TatB"/>
    <property type="match status" value="1"/>
</dbReference>
<dbReference type="Gene3D" id="1.20.5.3310">
    <property type="match status" value="1"/>
</dbReference>
<dbReference type="HAMAP" id="MF_00237">
    <property type="entry name" value="TatB"/>
    <property type="match status" value="1"/>
</dbReference>
<dbReference type="InterPro" id="IPR018448">
    <property type="entry name" value="TatB"/>
</dbReference>
<dbReference type="NCBIfam" id="TIGR01410">
    <property type="entry name" value="tatB"/>
    <property type="match status" value="1"/>
</dbReference>
<dbReference type="PANTHER" id="PTHR33162">
    <property type="entry name" value="SEC-INDEPENDENT PROTEIN TRANSLOCASE PROTEIN TATA, CHLOROPLASTIC"/>
    <property type="match status" value="1"/>
</dbReference>
<dbReference type="PANTHER" id="PTHR33162:SF1">
    <property type="entry name" value="SEC-INDEPENDENT PROTEIN TRANSLOCASE PROTEIN TATA, CHLOROPLASTIC"/>
    <property type="match status" value="1"/>
</dbReference>
<dbReference type="PRINTS" id="PR01506">
    <property type="entry name" value="TATBPROTEIN"/>
</dbReference>
<sequence length="171" mass="18421">MFDIGFSELLLVFIIGLVVLGPQRLPVAVKTVAGWIRALRSLATTVQNELTQELKLQEFQDSLKKVEKASLTNLTPELKASMDELRQAAESMKRSYVANDPEKASDEAHTIHNPVVKDNEAAHEGVTPAAAQTQASSPEQKPETTPEPVVKPAADAEPKTAAPSPSSSDKP</sequence>
<name>TATB_ECOLI</name>
<protein>
    <recommendedName>
        <fullName evidence="1">Sec-independent protein translocase protein TatB</fullName>
    </recommendedName>
</protein>
<reference key="1">
    <citation type="journal article" date="1998" name="EMBO J.">
        <title>Overlapping functions of components of a bacterial Sec-independent protein export pathway.</title>
        <authorList>
            <person name="Sargent F."/>
            <person name="Bogsch E.G."/>
            <person name="Stanley N.R."/>
            <person name="Wexler M."/>
            <person name="Robinson C."/>
            <person name="Berks B.C."/>
            <person name="Palmer T."/>
        </authorList>
    </citation>
    <scope>NUCLEOTIDE SEQUENCE [GENOMIC DNA]</scope>
    <source>
        <strain>K12 / MC4100 / ATCC 35695 / DSM 6574</strain>
    </source>
</reference>
<reference key="2">
    <citation type="journal article" date="1998" name="Cell">
        <title>A novel and ubiquitous system for membrane targeting and secretion of cofactor-containing proteins.</title>
        <authorList>
            <person name="Weiner J.H."/>
            <person name="Bilous P.T."/>
            <person name="Shaw G.M."/>
            <person name="Lubitz S.P."/>
            <person name="Frost L."/>
            <person name="Thomas G.H."/>
            <person name="Cole J.A."/>
            <person name="Turner R.J."/>
        </authorList>
    </citation>
    <scope>NUCLEOTIDE SEQUENCE [GENOMIC DNA]</scope>
    <source>
        <strain>ATCC 33694 / HB101</strain>
    </source>
</reference>
<reference key="3">
    <citation type="journal article" date="1992" name="Science">
        <title>Analysis of the Escherichia coli genome: DNA sequence of the region from 84.5 to 86.5 minutes.</title>
        <authorList>
            <person name="Daniels D.L."/>
            <person name="Plunkett G. III"/>
            <person name="Burland V.D."/>
            <person name="Blattner F.R."/>
        </authorList>
    </citation>
    <scope>NUCLEOTIDE SEQUENCE [LARGE SCALE GENOMIC DNA]</scope>
    <source>
        <strain>K12 / MG1655 / ATCC 47076</strain>
    </source>
</reference>
<reference key="4">
    <citation type="journal article" date="1997" name="Science">
        <title>The complete genome sequence of Escherichia coli K-12.</title>
        <authorList>
            <person name="Blattner F.R."/>
            <person name="Plunkett G. III"/>
            <person name="Bloch C.A."/>
            <person name="Perna N.T."/>
            <person name="Burland V."/>
            <person name="Riley M."/>
            <person name="Collado-Vides J."/>
            <person name="Glasner J.D."/>
            <person name="Rode C.K."/>
            <person name="Mayhew G.F."/>
            <person name="Gregor J."/>
            <person name="Davis N.W."/>
            <person name="Kirkpatrick H.A."/>
            <person name="Goeden M.A."/>
            <person name="Rose D.J."/>
            <person name="Mau B."/>
            <person name="Shao Y."/>
        </authorList>
    </citation>
    <scope>NUCLEOTIDE SEQUENCE [LARGE SCALE GENOMIC DNA]</scope>
    <scope>SEQUENCE REVISION</scope>
    <source>
        <strain>K12 / MG1655 / ATCC 47076</strain>
    </source>
</reference>
<reference key="5">
    <citation type="journal article" date="2006" name="Mol. Syst. Biol.">
        <title>Highly accurate genome sequences of Escherichia coli K-12 strains MG1655 and W3110.</title>
        <authorList>
            <person name="Hayashi K."/>
            <person name="Morooka N."/>
            <person name="Yamamoto Y."/>
            <person name="Fujita K."/>
            <person name="Isono K."/>
            <person name="Choi S."/>
            <person name="Ohtsubo E."/>
            <person name="Baba T."/>
            <person name="Wanner B.L."/>
            <person name="Mori H."/>
            <person name="Horiuchi T."/>
        </authorList>
    </citation>
    <scope>NUCLEOTIDE SEQUENCE [LARGE SCALE GENOMIC DNA]</scope>
    <source>
        <strain>K12 / W3110 / ATCC 27325 / DSM 5911</strain>
    </source>
</reference>
<reference key="6">
    <citation type="journal article" date="2001" name="J. Biol. Chem.">
        <title>TatB and TatC form a functional and structural unit of the twin-arginine translocase from Escherichia coli.</title>
        <authorList>
            <person name="Bolhuis A."/>
            <person name="Mathers J.E."/>
            <person name="Thomas J.D."/>
            <person name="Barrett C.M."/>
            <person name="Robinson C."/>
        </authorList>
    </citation>
    <scope>PROTEIN SEQUENCE OF 1-5</scope>
    <scope>INTERACTION WITH TATA AND TATC</scope>
    <source>
        <strain>K12 / MC4100 / ATCC 35695 / DSM 6574</strain>
    </source>
</reference>
<reference key="7">
    <citation type="journal article" date="1999" name="J. Biol. Chem.">
        <title>Sec-independent protein translocation in Escherichia coli. A distinct and pivotal role for the TatB protein.</title>
        <authorList>
            <person name="Sargent F."/>
            <person name="Stanley N.R."/>
            <person name="Berks B.C."/>
            <person name="Palmer T."/>
        </authorList>
    </citation>
    <scope>FUNCTION</scope>
    <scope>DISRUPTION PHENOTYPE</scope>
</reference>
<reference key="8">
    <citation type="journal article" date="2000" name="Mol. Microbiol.">
        <title>The Tat protein export pathway.</title>
        <authorList>
            <person name="Berks B.C."/>
            <person name="Sargent F."/>
            <person name="Palmer T."/>
        </authorList>
    </citation>
    <scope>REVIEW</scope>
</reference>
<reference key="9">
    <citation type="journal article" date="2001" name="Eur. J. Biochem.">
        <title>Purified components of the Escherichia coli Tat protein transport system form a double-layered ring structure.</title>
        <authorList>
            <person name="Sargent F."/>
            <person name="Gohlke U."/>
            <person name="De Leeuw E."/>
            <person name="Stanley N.R."/>
            <person name="Palmer T."/>
            <person name="Saibil H.R."/>
            <person name="Berks B.C."/>
        </authorList>
    </citation>
    <scope>SUBUNIT</scope>
    <scope>COMPLEX BETWEEN TATA AND TATB</scope>
</reference>
<reference key="10">
    <citation type="journal article" date="2001" name="FEBS Lett.">
        <title>Membrane interactions and self-association of the TatA and TatB components of the twin-arginine translocation pathway.</title>
        <authorList>
            <person name="De Leeuw E."/>
            <person name="Porcelli I."/>
            <person name="Sargent F."/>
            <person name="Palmer T."/>
            <person name="Berks B.C."/>
        </authorList>
    </citation>
    <scope>SUBCELLULAR LOCATION</scope>
</reference>
<reference key="11">
    <citation type="journal article" date="2001" name="J. Bacteriol.">
        <title>Constitutive expression of Escherichia coli tat genes indicates an important role for the twin-arginine translocase during aerobic and anaerobic growth.</title>
        <authorList>
            <person name="Jack R.L."/>
            <person name="Sargent F."/>
            <person name="Berks B.C."/>
            <person name="Sawers G."/>
            <person name="Palmer T."/>
        </authorList>
    </citation>
    <scope>INDUCTION</scope>
</reference>
<reference key="12">
    <citation type="journal article" date="2002" name="J. Mol. Biol.">
        <title>In vivo dissection of the Tat translocation pathway in Escherichia coli.</title>
        <authorList>
            <person name="Ize B."/>
            <person name="Gerard F."/>
            <person name="Zhang M."/>
            <person name="Chanal A."/>
            <person name="Voulhoux R."/>
            <person name="Palmer T."/>
            <person name="Filloux A."/>
            <person name="Wu L.F."/>
        </authorList>
    </citation>
    <scope>FUNCTION</scope>
    <source>
        <strain>K12 / MC4100 / ATCC 35695 / DSM 6574</strain>
    </source>
</reference>
<reference key="13">
    <citation type="journal article" date="2003" name="Mol. Cell">
        <title>Differential interactions between a twin-arginine signal peptide and its translocase in Escherichia coli.</title>
        <authorList>
            <person name="Alami M."/>
            <person name="Luke I."/>
            <person name="Deitermann S."/>
            <person name="Eisner G."/>
            <person name="Koch H.G."/>
            <person name="Brunner J."/>
            <person name="Muller M."/>
        </authorList>
    </citation>
    <scope>FUNCTION</scope>
</reference>
<reference key="14">
    <citation type="journal article" date="2004" name="FEBS Lett.">
        <title>Localization of the Tat translocon components in Escherichia coli.</title>
        <authorList>
            <person name="Berthelmann F."/>
            <person name="Bruser T."/>
        </authorList>
    </citation>
    <scope>SUBUNIT</scope>
    <scope>SUBCELLULAR LOCATION</scope>
    <source>
        <strain>K12 / MC4100 / ATCC 35695 / DSM 6574</strain>
    </source>
</reference>
<reference key="15">
    <citation type="journal article" date="2005" name="J. Mol. Biol.">
        <title>The Escherichia coli twin-arginine translocation apparatus incorporates a distinct form of TatABC complex, spectrum of modular TatA complexes and minor TatAB complex.</title>
        <authorList>
            <person name="Oates J."/>
            <person name="Barrett C.M."/>
            <person name="Barnett J.P."/>
            <person name="Byrne K.G."/>
            <person name="Bolhuis A."/>
            <person name="Robinson C."/>
        </authorList>
    </citation>
    <scope>SUBUNIT</scope>
    <source>
        <strain>K12 / MC4100 / ATCC 35695 / DSM 6574</strain>
    </source>
</reference>
<reference key="16">
    <citation type="journal article" date="2005" name="J. Mol. Biol.">
        <title>The core TatABC complex of the twin-arginine translocase in Escherichia coli: TatC drives assembly whereas TatA is essential for stability.</title>
        <authorList>
            <person name="Mangels D."/>
            <person name="Mathers J.E."/>
            <person name="Bolhuis A."/>
            <person name="Robinson C."/>
        </authorList>
    </citation>
    <scope>SUBUNIT</scope>
</reference>
<reference key="17">
    <citation type="journal article" date="2007" name="FEBS Lett.">
        <title>TatBC, TatB, and TatC form structurally autonomous units within the twin arginine protein transport system of Escherichia coli.</title>
        <authorList>
            <person name="Orriss G.L."/>
            <person name="Tarry M.J."/>
            <person name="Ize B."/>
            <person name="Sargent F."/>
            <person name="Lea S.M."/>
            <person name="Palmer T."/>
            <person name="Berks B.C."/>
        </authorList>
    </citation>
    <scope>SUBUNIT</scope>
    <source>
        <strain>K12 / MC4100 / ATCC 35695 / DSM 6574</strain>
    </source>
</reference>
<reference key="18">
    <citation type="journal article" date="2009" name="Proc. Natl. Acad. Sci. U.S.A.">
        <title>Structural analysis of substrate binding by the TatBC component of the twin-arginine protein transport system.</title>
        <authorList>
            <person name="Tarry M.J."/>
            <person name="Schafer E."/>
            <person name="Chen S."/>
            <person name="Buchanan G."/>
            <person name="Greene N.P."/>
            <person name="Lea S.M."/>
            <person name="Palmer T."/>
            <person name="Saibil H.R."/>
            <person name="Berks B.C."/>
        </authorList>
    </citation>
    <scope>FUNCTION</scope>
    <scope>SUBSTRATE BINDING</scope>
</reference>
<reference key="19">
    <citation type="journal article" date="2010" name="Mol. Biol. Cell">
        <title>TatB functions as an oligomeric binding site for folded Tat precursor proteins.</title>
        <authorList>
            <person name="Maurer C."/>
            <person name="Panahandeh S."/>
            <person name="Jungkamp A.C."/>
            <person name="Moser M."/>
            <person name="Muller M."/>
        </authorList>
    </citation>
    <scope>FUNCTION</scope>
    <scope>SUBSTRATE BINDING</scope>
</reference>
<reference key="20">
    <citation type="journal article" date="2010" name="PLoS ONE">
        <title>Visualizing interactions along the Escherichia coli twin-arginine translocation pathway using protein fragment complementation.</title>
        <authorList>
            <person name="Kostecki J.S."/>
            <person name="Li H."/>
            <person name="Turner R.J."/>
            <person name="DeLisa M.P."/>
        </authorList>
    </citation>
    <scope>SUBUNIT</scope>
    <scope>INTERACTION WITH DMSA AND DMSD</scope>
    <scope>SUBCELLULAR LOCATION</scope>
</reference>
<reference key="21">
    <citation type="journal article" date="2011" name="FEBS Lett.">
        <title>Characterisation of the membrane-extrinsic domain of the TatB component of the twin arginine protein translocase.</title>
        <authorList>
            <person name="Maldonado B."/>
            <person name="Kneuper H."/>
            <person name="Buchanan G."/>
            <person name="Hatzixanthis K."/>
            <person name="Sargent F."/>
            <person name="Berks B.C."/>
            <person name="Palmer T."/>
        </authorList>
    </citation>
    <scope>DOMAIN</scope>
</reference>
<comment type="function">
    <text evidence="1 3 8 9 14 16">Part of the twin-arginine translocation (Tat) system that transports large folded proteins containing a characteristic twin-arginine motif in their signal peptide across membranes. Together with TatC, TatB is part of a receptor directly interacting with Tat signal peptides. TatB may form an oligomeric binding site that transiently accommodates folded Tat precursor proteins before their translocation.</text>
</comment>
<comment type="subunit">
    <text evidence="1 5 6 10 11 12 13 15">The Tat system comprises two distinct complexes: a TatABC complex, containing multiple copies of TatA, TatB and TatC subunits, and a separate TatA complex, containing only TatA subunits. Substrates initially bind to the TatABC complex, which probably triggers association of the separate TatA complex to form the active translocon. A complex containing only TatA and TatB has also been identified. It could be either an assembly intermediate or a disassembly intermediate generated during translocation activity. Each of TatA, TatB and TatC are able to interact in pairs without the third partner; TatB also forms homooligomers. Interacts with the signal sequence of DmsA and DmsD.</text>
</comment>
<comment type="interaction">
    <interactant intactId="EBI-4411577">
        <id>P69425</id>
    </interactant>
    <interactant intactId="EBI-4411577">
        <id>P69425</id>
        <label>tatB</label>
    </interactant>
    <organismsDiffer>false</organismsDiffer>
    <experiments>3</experiments>
</comment>
<comment type="interaction">
    <interactant intactId="EBI-4411577">
        <id>P69425</id>
    </interactant>
    <interactant intactId="EBI-4411641">
        <id>P69423</id>
        <label>tatC</label>
    </interactant>
    <organismsDiffer>false</organismsDiffer>
    <experiments>9</experiments>
</comment>
<comment type="subcellular location">
    <subcellularLocation>
        <location evidence="1 7 10 15">Cell inner membrane</location>
        <topology evidence="1 7 10 15">Single-pass membrane protein</topology>
    </subcellularLocation>
    <text>Localizes at the cell poles.</text>
</comment>
<comment type="induction">
    <text evidence="4">Constitutively expressed.</text>
</comment>
<comment type="domain">
    <text evidence="17">The membrane-extrinsic domain forms parallel contacts with at least one other TatB protein.</text>
</comment>
<comment type="disruption phenotype">
    <text evidence="3">Disruption blocks the export of seven endogenous Tat substrates.</text>
</comment>
<comment type="similarity">
    <text evidence="1">Belongs to the TatB family.</text>
</comment>
<proteinExistence type="evidence at protein level"/>
<accession>P69425</accession>
<accession>O69415</accession>
<accession>O87926</accession>
<accession>P27856</accession>
<accession>Q2M8E2</accession>
<organism>
    <name type="scientific">Escherichia coli (strain K12)</name>
    <dbReference type="NCBI Taxonomy" id="83333"/>
    <lineage>
        <taxon>Bacteria</taxon>
        <taxon>Pseudomonadati</taxon>
        <taxon>Pseudomonadota</taxon>
        <taxon>Gammaproteobacteria</taxon>
        <taxon>Enterobacterales</taxon>
        <taxon>Enterobacteriaceae</taxon>
        <taxon>Escherichia</taxon>
    </lineage>
</organism>
<gene>
    <name evidence="1" type="primary">tatB</name>
    <name type="synonym">mttA2</name>
    <name type="synonym">ysgB</name>
    <name type="ordered locus">b3838</name>
    <name type="ordered locus">JW5580</name>
</gene>
<feature type="chain" id="PRO_0000192653" description="Sec-independent protein translocase protein TatB">
    <location>
        <begin position="1"/>
        <end position="171"/>
    </location>
</feature>
<feature type="transmembrane region" description="Helical" evidence="1">
    <location>
        <begin position="1"/>
        <end position="21"/>
    </location>
</feature>
<feature type="region of interest" description="Disordered" evidence="2">
    <location>
        <begin position="117"/>
        <end position="171"/>
    </location>
</feature>
<feature type="compositionally biased region" description="Polar residues" evidence="2">
    <location>
        <begin position="130"/>
        <end position="139"/>
    </location>
</feature>